<accession>P42006</accession>
<sequence length="473" mass="52057">MTRGRVIQVMGPVVDVKFETGHLPAIYNALKIQHQARNENEVDIDLTLEVALHLGDDTVRTIAMASTDGLIRGMEVIDTGAPISRPVGEVTLGRVFNVLGEPIDLEGDIPADARRDPIHRPAPKFEELATEVEILETGIKVIDLLAPYIKGGKIGLFGGAGVGKTVLIQELIHNIAQEHGGISVFAGFGERTREGNDLYHEMKDSGVISKTGMVFGQMNEPPGPRMRVALTGLTMAEYFRDEQGQDVLLFIDNNFRFTQAGSEVSALLGRMPSAVGYQPTLATEMGQLQERITSTAKGSITSIQAIYVPADDYTDPAPATTFSHLDATTNLERKLAEMGIYPAVDPLASTSRALAPEIVGEEHYQVARKVQQTLQRYKELQDIIAILGMDELSDEDKLVVHRARRIQFFLSQNFHVAEQFTGQPGSYVPVKETVRGFKEILEGKYDHLPEDRFRLVGRIEEVVEKAKAMGVEV</sequence>
<evidence type="ECO:0000255" key="1">
    <source>
        <dbReference type="HAMAP-Rule" id="MF_01347"/>
    </source>
</evidence>
<keyword id="KW-0066">ATP synthesis</keyword>
<keyword id="KW-0067">ATP-binding</keyword>
<keyword id="KW-1003">Cell membrane</keyword>
<keyword id="KW-0139">CF(1)</keyword>
<keyword id="KW-0375">Hydrogen ion transport</keyword>
<keyword id="KW-0406">Ion transport</keyword>
<keyword id="KW-0472">Membrane</keyword>
<keyword id="KW-0547">Nucleotide-binding</keyword>
<keyword id="KW-1278">Translocase</keyword>
<keyword id="KW-0813">Transport</keyword>
<name>ATPB_GEOSE</name>
<protein>
    <recommendedName>
        <fullName evidence="1">ATP synthase subunit beta</fullName>
        <ecNumber evidence="1">7.1.2.2</ecNumber>
    </recommendedName>
    <alternativeName>
        <fullName evidence="1">ATP synthase F1 sector subunit beta</fullName>
    </alternativeName>
    <alternativeName>
        <fullName evidence="1">F-ATPase subunit beta</fullName>
    </alternativeName>
</protein>
<dbReference type="EC" id="7.1.2.2" evidence="1"/>
<dbReference type="EMBL" id="D38060">
    <property type="protein sequence ID" value="BAA07255.1"/>
    <property type="molecule type" value="Genomic_DNA"/>
</dbReference>
<dbReference type="BMRB" id="P42006"/>
<dbReference type="SMR" id="P42006"/>
<dbReference type="GO" id="GO:0005886">
    <property type="term" value="C:plasma membrane"/>
    <property type="evidence" value="ECO:0007669"/>
    <property type="project" value="UniProtKB-SubCell"/>
</dbReference>
<dbReference type="GO" id="GO:0045259">
    <property type="term" value="C:proton-transporting ATP synthase complex"/>
    <property type="evidence" value="ECO:0007669"/>
    <property type="project" value="UniProtKB-KW"/>
</dbReference>
<dbReference type="GO" id="GO:0005524">
    <property type="term" value="F:ATP binding"/>
    <property type="evidence" value="ECO:0007669"/>
    <property type="project" value="UniProtKB-UniRule"/>
</dbReference>
<dbReference type="GO" id="GO:0016887">
    <property type="term" value="F:ATP hydrolysis activity"/>
    <property type="evidence" value="ECO:0007669"/>
    <property type="project" value="InterPro"/>
</dbReference>
<dbReference type="GO" id="GO:0046933">
    <property type="term" value="F:proton-transporting ATP synthase activity, rotational mechanism"/>
    <property type="evidence" value="ECO:0007669"/>
    <property type="project" value="UniProtKB-UniRule"/>
</dbReference>
<dbReference type="CDD" id="cd18110">
    <property type="entry name" value="ATP-synt_F1_beta_C"/>
    <property type="match status" value="1"/>
</dbReference>
<dbReference type="CDD" id="cd18115">
    <property type="entry name" value="ATP-synt_F1_beta_N"/>
    <property type="match status" value="1"/>
</dbReference>
<dbReference type="CDD" id="cd01133">
    <property type="entry name" value="F1-ATPase_beta_CD"/>
    <property type="match status" value="1"/>
</dbReference>
<dbReference type="FunFam" id="1.10.1140.10:FF:000001">
    <property type="entry name" value="ATP synthase subunit beta"/>
    <property type="match status" value="1"/>
</dbReference>
<dbReference type="FunFam" id="2.40.10.170:FF:000005">
    <property type="entry name" value="ATP synthase subunit beta"/>
    <property type="match status" value="1"/>
</dbReference>
<dbReference type="FunFam" id="3.40.50.300:FF:000004">
    <property type="entry name" value="ATP synthase subunit beta"/>
    <property type="match status" value="1"/>
</dbReference>
<dbReference type="Gene3D" id="2.40.10.170">
    <property type="match status" value="1"/>
</dbReference>
<dbReference type="Gene3D" id="1.10.1140.10">
    <property type="entry name" value="Bovine Mitochondrial F1-atpase, Atp Synthase Beta Chain, Chain D, domain 3"/>
    <property type="match status" value="1"/>
</dbReference>
<dbReference type="Gene3D" id="3.40.50.300">
    <property type="entry name" value="P-loop containing nucleotide triphosphate hydrolases"/>
    <property type="match status" value="1"/>
</dbReference>
<dbReference type="HAMAP" id="MF_01347">
    <property type="entry name" value="ATP_synth_beta_bact"/>
    <property type="match status" value="1"/>
</dbReference>
<dbReference type="InterPro" id="IPR003593">
    <property type="entry name" value="AAA+_ATPase"/>
</dbReference>
<dbReference type="InterPro" id="IPR055190">
    <property type="entry name" value="ATP-synt_VA_C"/>
</dbReference>
<dbReference type="InterPro" id="IPR005722">
    <property type="entry name" value="ATP_synth_F1_bsu"/>
</dbReference>
<dbReference type="InterPro" id="IPR020003">
    <property type="entry name" value="ATPase_a/bsu_AS"/>
</dbReference>
<dbReference type="InterPro" id="IPR050053">
    <property type="entry name" value="ATPase_alpha/beta_chains"/>
</dbReference>
<dbReference type="InterPro" id="IPR004100">
    <property type="entry name" value="ATPase_F1/V1/A1_a/bsu_N"/>
</dbReference>
<dbReference type="InterPro" id="IPR036121">
    <property type="entry name" value="ATPase_F1/V1/A1_a/bsu_N_sf"/>
</dbReference>
<dbReference type="InterPro" id="IPR000194">
    <property type="entry name" value="ATPase_F1/V1/A1_a/bsu_nucl-bd"/>
</dbReference>
<dbReference type="InterPro" id="IPR024034">
    <property type="entry name" value="ATPase_F1/V1_b/a_C"/>
</dbReference>
<dbReference type="InterPro" id="IPR027417">
    <property type="entry name" value="P-loop_NTPase"/>
</dbReference>
<dbReference type="NCBIfam" id="TIGR01039">
    <property type="entry name" value="atpD"/>
    <property type="match status" value="1"/>
</dbReference>
<dbReference type="PANTHER" id="PTHR15184">
    <property type="entry name" value="ATP SYNTHASE"/>
    <property type="match status" value="1"/>
</dbReference>
<dbReference type="PANTHER" id="PTHR15184:SF71">
    <property type="entry name" value="ATP SYNTHASE SUBUNIT BETA, MITOCHONDRIAL"/>
    <property type="match status" value="1"/>
</dbReference>
<dbReference type="Pfam" id="PF00006">
    <property type="entry name" value="ATP-synt_ab"/>
    <property type="match status" value="1"/>
</dbReference>
<dbReference type="Pfam" id="PF02874">
    <property type="entry name" value="ATP-synt_ab_N"/>
    <property type="match status" value="1"/>
</dbReference>
<dbReference type="Pfam" id="PF22919">
    <property type="entry name" value="ATP-synt_VA_C"/>
    <property type="match status" value="1"/>
</dbReference>
<dbReference type="SMART" id="SM00382">
    <property type="entry name" value="AAA"/>
    <property type="match status" value="1"/>
</dbReference>
<dbReference type="SUPFAM" id="SSF47917">
    <property type="entry name" value="C-terminal domain of alpha and beta subunits of F1 ATP synthase"/>
    <property type="match status" value="1"/>
</dbReference>
<dbReference type="SUPFAM" id="SSF50615">
    <property type="entry name" value="N-terminal domain of alpha and beta subunits of F1 ATP synthase"/>
    <property type="match status" value="1"/>
</dbReference>
<dbReference type="SUPFAM" id="SSF52540">
    <property type="entry name" value="P-loop containing nucleoside triphosphate hydrolases"/>
    <property type="match status" value="1"/>
</dbReference>
<dbReference type="PROSITE" id="PS00152">
    <property type="entry name" value="ATPASE_ALPHA_BETA"/>
    <property type="match status" value="1"/>
</dbReference>
<feature type="chain" id="PRO_0000144424" description="ATP synthase subunit beta">
    <location>
        <begin position="1"/>
        <end position="473"/>
    </location>
</feature>
<feature type="binding site" evidence="1">
    <location>
        <begin position="158"/>
        <end position="165"/>
    </location>
    <ligand>
        <name>ATP</name>
        <dbReference type="ChEBI" id="CHEBI:30616"/>
    </ligand>
</feature>
<reference key="1">
    <citation type="submission" date="1994-08" db="EMBL/GenBank/DDBJ databases">
        <title>Nucleotide sequence of the gene for F1 subunits of proton-ATPase from Bacillus stearothermophilus.</title>
        <authorList>
            <person name="Ishizuka M."/>
            <person name="Imai H."/>
        </authorList>
    </citation>
    <scope>NUCLEOTIDE SEQUENCE [GENOMIC DNA]</scope>
</reference>
<proteinExistence type="inferred from homology"/>
<comment type="function">
    <text evidence="1">Produces ATP from ADP in the presence of a proton gradient across the membrane. The catalytic sites are hosted primarily by the beta subunits.</text>
</comment>
<comment type="catalytic activity">
    <reaction evidence="1">
        <text>ATP + H2O + 4 H(+)(in) = ADP + phosphate + 5 H(+)(out)</text>
        <dbReference type="Rhea" id="RHEA:57720"/>
        <dbReference type="ChEBI" id="CHEBI:15377"/>
        <dbReference type="ChEBI" id="CHEBI:15378"/>
        <dbReference type="ChEBI" id="CHEBI:30616"/>
        <dbReference type="ChEBI" id="CHEBI:43474"/>
        <dbReference type="ChEBI" id="CHEBI:456216"/>
        <dbReference type="EC" id="7.1.2.2"/>
    </reaction>
</comment>
<comment type="subunit">
    <text evidence="1">F-type ATPases have 2 components, CF(1) - the catalytic core - and CF(0) - the membrane proton channel. CF(1) has five subunits: alpha(3), beta(3), gamma(1), delta(1), epsilon(1). CF(0) has three main subunits: a(1), b(2) and c(9-12). The alpha and beta chains form an alternating ring which encloses part of the gamma chain. CF(1) is attached to CF(0) by a central stalk formed by the gamma and epsilon chains, while a peripheral stalk is formed by the delta and b chains.</text>
</comment>
<comment type="subcellular location">
    <subcellularLocation>
        <location evidence="1">Cell membrane</location>
        <topology evidence="1">Peripheral membrane protein</topology>
    </subcellularLocation>
</comment>
<comment type="similarity">
    <text evidence="1">Belongs to the ATPase alpha/beta chains family.</text>
</comment>
<gene>
    <name evidence="1" type="primary">atpD</name>
</gene>
<organism>
    <name type="scientific">Geobacillus stearothermophilus</name>
    <name type="common">Bacillus stearothermophilus</name>
    <dbReference type="NCBI Taxonomy" id="1422"/>
    <lineage>
        <taxon>Bacteria</taxon>
        <taxon>Bacillati</taxon>
        <taxon>Bacillota</taxon>
        <taxon>Bacilli</taxon>
        <taxon>Bacillales</taxon>
        <taxon>Anoxybacillaceae</taxon>
        <taxon>Geobacillus</taxon>
    </lineage>
</organism>